<proteinExistence type="evidence at protein level"/>
<sequence length="456" mass="51190">MENRRQDYILRVRYHNPLPPPPFPPKLINIPNPVKQYALPNFVSTLVQEKKIPIENDIELGMPLDLAGITGFFEGDTSWMHSDLSSVNLDPIDRSLLKVAGGSGSTHLEVPFLRRTEYISSEVARAASNRGNLRLTASTSKALAEQRGRSLREVPKQLEAINESFDVVQQPLEQLKHPTKPDLKPVSAWNLLPNTSMAGIQHLMLRVADDLSERSHSYSSLVNLQEGHNLTKRHEVALFMPSSAEGEEFLSYYLPSEETAEEIQAKVNDASADVHEPFVYNHFRNFDASMHVNSTGLEDLCLTFHTDKDHPEANQVLYTPIYARSTLKRRHVRAPVSLDAVDGIELSLRDLNDEESLQLKRARYDTFGLGNIKDLEEEEEKLRSVEGSLNEELSEEEKPAESREQLESAEQTNGVKPETQAQNMSASESQANSPAPPVEEGNTQPSPVEQLQNEED</sequence>
<accession>Q9US06</accession>
<gene>
    <name type="ORF">SPAC664.03</name>
</gene>
<keyword id="KW-0963">Cytoplasm</keyword>
<keyword id="KW-0539">Nucleus</keyword>
<keyword id="KW-0597">Phosphoprotein</keyword>
<keyword id="KW-1185">Reference proteome</keyword>
<feature type="chain" id="PRO_0000318139" description="RNA polymerase II-associated protein 1 homolog">
    <location>
        <begin position="1"/>
        <end position="456"/>
    </location>
</feature>
<feature type="region of interest" description="Disordered" evidence="1">
    <location>
        <begin position="382"/>
        <end position="456"/>
    </location>
</feature>
<feature type="compositionally biased region" description="Basic and acidic residues" evidence="1">
    <location>
        <begin position="396"/>
        <end position="406"/>
    </location>
</feature>
<feature type="compositionally biased region" description="Polar residues" evidence="1">
    <location>
        <begin position="408"/>
        <end position="433"/>
    </location>
</feature>
<feature type="compositionally biased region" description="Polar residues" evidence="1">
    <location>
        <begin position="441"/>
        <end position="456"/>
    </location>
</feature>
<feature type="modified residue" description="Phosphoserine" evidence="3">
    <location>
        <position position="388"/>
    </location>
</feature>
<dbReference type="EMBL" id="CU329670">
    <property type="protein sequence ID" value="CAB65804.2"/>
    <property type="molecule type" value="Genomic_DNA"/>
</dbReference>
<dbReference type="PIR" id="T50233">
    <property type="entry name" value="T50233"/>
</dbReference>
<dbReference type="BioGRID" id="279976">
    <property type="interactions" value="16"/>
</dbReference>
<dbReference type="FunCoup" id="Q9US06">
    <property type="interactions" value="669"/>
</dbReference>
<dbReference type="STRING" id="284812.Q9US06"/>
<dbReference type="iPTMnet" id="Q9US06"/>
<dbReference type="PaxDb" id="4896-SPAC664.03.1"/>
<dbReference type="EnsemblFungi" id="SPAC664.03.1">
    <property type="protein sequence ID" value="SPAC664.03.1:pep"/>
    <property type="gene ID" value="SPAC664.03"/>
</dbReference>
<dbReference type="KEGG" id="spo:2543560"/>
<dbReference type="PomBase" id="SPAC664.03"/>
<dbReference type="VEuPathDB" id="FungiDB:SPAC664.03"/>
<dbReference type="eggNOG" id="KOG2478">
    <property type="taxonomic scope" value="Eukaryota"/>
</dbReference>
<dbReference type="HOGENOM" id="CLU_021991_3_1_1"/>
<dbReference type="InParanoid" id="Q9US06"/>
<dbReference type="OMA" id="LVCRIKY"/>
<dbReference type="PRO" id="PR:Q9US06"/>
<dbReference type="Proteomes" id="UP000002485">
    <property type="component" value="Chromosome I"/>
</dbReference>
<dbReference type="GO" id="GO:0016593">
    <property type="term" value="C:Cdc73/Paf1 complex"/>
    <property type="evidence" value="ECO:0000353"/>
    <property type="project" value="PomBase"/>
</dbReference>
<dbReference type="GO" id="GO:0005829">
    <property type="term" value="C:cytosol"/>
    <property type="evidence" value="ECO:0007005"/>
    <property type="project" value="PomBase"/>
</dbReference>
<dbReference type="GO" id="GO:0005634">
    <property type="term" value="C:nucleus"/>
    <property type="evidence" value="ECO:0007005"/>
    <property type="project" value="PomBase"/>
</dbReference>
<dbReference type="GO" id="GO:0003682">
    <property type="term" value="F:chromatin binding"/>
    <property type="evidence" value="ECO:0000318"/>
    <property type="project" value="GO_Central"/>
</dbReference>
<dbReference type="GO" id="GO:0000993">
    <property type="term" value="F:RNA polymerase II complex binding"/>
    <property type="evidence" value="ECO:0000318"/>
    <property type="project" value="GO_Central"/>
</dbReference>
<dbReference type="GO" id="GO:0033696">
    <property type="term" value="P:heterochromatin boundary formation"/>
    <property type="evidence" value="ECO:0000315"/>
    <property type="project" value="PomBase"/>
</dbReference>
<dbReference type="GO" id="GO:0006368">
    <property type="term" value="P:transcription elongation by RNA polymerase II"/>
    <property type="evidence" value="ECO:0000266"/>
    <property type="project" value="PomBase"/>
</dbReference>
<dbReference type="InterPro" id="IPR007133">
    <property type="entry name" value="RNA_pol_II-assoc_Paf1"/>
</dbReference>
<dbReference type="PANTHER" id="PTHR23188">
    <property type="entry name" value="RNA POLYMERASE II-ASSOCIATED FACTOR 1 HOMOLOG"/>
    <property type="match status" value="1"/>
</dbReference>
<dbReference type="PANTHER" id="PTHR23188:SF12">
    <property type="entry name" value="RNA POLYMERASE II-ASSOCIATED FACTOR 1 HOMOLOG"/>
    <property type="match status" value="1"/>
</dbReference>
<dbReference type="Pfam" id="PF03985">
    <property type="entry name" value="Paf1"/>
    <property type="match status" value="1"/>
</dbReference>
<protein>
    <recommendedName>
        <fullName>RNA polymerase II-associated protein 1 homolog</fullName>
    </recommendedName>
</protein>
<organism>
    <name type="scientific">Schizosaccharomyces pombe (strain 972 / ATCC 24843)</name>
    <name type="common">Fission yeast</name>
    <dbReference type="NCBI Taxonomy" id="284812"/>
    <lineage>
        <taxon>Eukaryota</taxon>
        <taxon>Fungi</taxon>
        <taxon>Dikarya</taxon>
        <taxon>Ascomycota</taxon>
        <taxon>Taphrinomycotina</taxon>
        <taxon>Schizosaccharomycetes</taxon>
        <taxon>Schizosaccharomycetales</taxon>
        <taxon>Schizosaccharomycetaceae</taxon>
        <taxon>Schizosaccharomyces</taxon>
    </lineage>
</organism>
<reference key="1">
    <citation type="journal article" date="2002" name="Nature">
        <title>The genome sequence of Schizosaccharomyces pombe.</title>
        <authorList>
            <person name="Wood V."/>
            <person name="Gwilliam R."/>
            <person name="Rajandream M.A."/>
            <person name="Lyne M.H."/>
            <person name="Lyne R."/>
            <person name="Stewart A."/>
            <person name="Sgouros J.G."/>
            <person name="Peat N."/>
            <person name="Hayles J."/>
            <person name="Baker S.G."/>
            <person name="Basham D."/>
            <person name="Bowman S."/>
            <person name="Brooks K."/>
            <person name="Brown D."/>
            <person name="Brown S."/>
            <person name="Chillingworth T."/>
            <person name="Churcher C.M."/>
            <person name="Collins M."/>
            <person name="Connor R."/>
            <person name="Cronin A."/>
            <person name="Davis P."/>
            <person name="Feltwell T."/>
            <person name="Fraser A."/>
            <person name="Gentles S."/>
            <person name="Goble A."/>
            <person name="Hamlin N."/>
            <person name="Harris D.E."/>
            <person name="Hidalgo J."/>
            <person name="Hodgson G."/>
            <person name="Holroyd S."/>
            <person name="Hornsby T."/>
            <person name="Howarth S."/>
            <person name="Huckle E.J."/>
            <person name="Hunt S."/>
            <person name="Jagels K."/>
            <person name="James K.D."/>
            <person name="Jones L."/>
            <person name="Jones M."/>
            <person name="Leather S."/>
            <person name="McDonald S."/>
            <person name="McLean J."/>
            <person name="Mooney P."/>
            <person name="Moule S."/>
            <person name="Mungall K.L."/>
            <person name="Murphy L.D."/>
            <person name="Niblett D."/>
            <person name="Odell C."/>
            <person name="Oliver K."/>
            <person name="O'Neil S."/>
            <person name="Pearson D."/>
            <person name="Quail M.A."/>
            <person name="Rabbinowitsch E."/>
            <person name="Rutherford K.M."/>
            <person name="Rutter S."/>
            <person name="Saunders D."/>
            <person name="Seeger K."/>
            <person name="Sharp S."/>
            <person name="Skelton J."/>
            <person name="Simmonds M.N."/>
            <person name="Squares R."/>
            <person name="Squares S."/>
            <person name="Stevens K."/>
            <person name="Taylor K."/>
            <person name="Taylor R.G."/>
            <person name="Tivey A."/>
            <person name="Walsh S.V."/>
            <person name="Warren T."/>
            <person name="Whitehead S."/>
            <person name="Woodward J.R."/>
            <person name="Volckaert G."/>
            <person name="Aert R."/>
            <person name="Robben J."/>
            <person name="Grymonprez B."/>
            <person name="Weltjens I."/>
            <person name="Vanstreels E."/>
            <person name="Rieger M."/>
            <person name="Schaefer M."/>
            <person name="Mueller-Auer S."/>
            <person name="Gabel C."/>
            <person name="Fuchs M."/>
            <person name="Duesterhoeft A."/>
            <person name="Fritzc C."/>
            <person name="Holzer E."/>
            <person name="Moestl D."/>
            <person name="Hilbert H."/>
            <person name="Borzym K."/>
            <person name="Langer I."/>
            <person name="Beck A."/>
            <person name="Lehrach H."/>
            <person name="Reinhardt R."/>
            <person name="Pohl T.M."/>
            <person name="Eger P."/>
            <person name="Zimmermann W."/>
            <person name="Wedler H."/>
            <person name="Wambutt R."/>
            <person name="Purnelle B."/>
            <person name="Goffeau A."/>
            <person name="Cadieu E."/>
            <person name="Dreano S."/>
            <person name="Gloux S."/>
            <person name="Lelaure V."/>
            <person name="Mottier S."/>
            <person name="Galibert F."/>
            <person name="Aves S.J."/>
            <person name="Xiang Z."/>
            <person name="Hunt C."/>
            <person name="Moore K."/>
            <person name="Hurst S.M."/>
            <person name="Lucas M."/>
            <person name="Rochet M."/>
            <person name="Gaillardin C."/>
            <person name="Tallada V.A."/>
            <person name="Garzon A."/>
            <person name="Thode G."/>
            <person name="Daga R.R."/>
            <person name="Cruzado L."/>
            <person name="Jimenez J."/>
            <person name="Sanchez M."/>
            <person name="del Rey F."/>
            <person name="Benito J."/>
            <person name="Dominguez A."/>
            <person name="Revuelta J.L."/>
            <person name="Moreno S."/>
            <person name="Armstrong J."/>
            <person name="Forsburg S.L."/>
            <person name="Cerutti L."/>
            <person name="Lowe T."/>
            <person name="McCombie W.R."/>
            <person name="Paulsen I."/>
            <person name="Potashkin J."/>
            <person name="Shpakovski G.V."/>
            <person name="Ussery D."/>
            <person name="Barrell B.G."/>
            <person name="Nurse P."/>
        </authorList>
    </citation>
    <scope>NUCLEOTIDE SEQUENCE [LARGE SCALE GENOMIC DNA]</scope>
    <source>
        <strain>972 / ATCC 24843</strain>
    </source>
</reference>
<reference key="2">
    <citation type="journal article" date="2011" name="Science">
        <title>Comparative functional genomics of the fission yeasts.</title>
        <authorList>
            <person name="Rhind N."/>
            <person name="Chen Z."/>
            <person name="Yassour M."/>
            <person name="Thompson D.A."/>
            <person name="Haas B.J."/>
            <person name="Habib N."/>
            <person name="Wapinski I."/>
            <person name="Roy S."/>
            <person name="Lin M.F."/>
            <person name="Heiman D.I."/>
            <person name="Young S.K."/>
            <person name="Furuya K."/>
            <person name="Guo Y."/>
            <person name="Pidoux A."/>
            <person name="Chen H.M."/>
            <person name="Robbertse B."/>
            <person name="Goldberg J.M."/>
            <person name="Aoki K."/>
            <person name="Bayne E.H."/>
            <person name="Berlin A.M."/>
            <person name="Desjardins C.A."/>
            <person name="Dobbs E."/>
            <person name="Dukaj L."/>
            <person name="Fan L."/>
            <person name="FitzGerald M.G."/>
            <person name="French C."/>
            <person name="Gujja S."/>
            <person name="Hansen K."/>
            <person name="Keifenheim D."/>
            <person name="Levin J.Z."/>
            <person name="Mosher R.A."/>
            <person name="Mueller C.A."/>
            <person name="Pfiffner J."/>
            <person name="Priest M."/>
            <person name="Russ C."/>
            <person name="Smialowska A."/>
            <person name="Swoboda P."/>
            <person name="Sykes S.M."/>
            <person name="Vaughn M."/>
            <person name="Vengrova S."/>
            <person name="Yoder R."/>
            <person name="Zeng Q."/>
            <person name="Allshire R."/>
            <person name="Baulcombe D."/>
            <person name="Birren B.W."/>
            <person name="Brown W."/>
            <person name="Ekwall K."/>
            <person name="Kellis M."/>
            <person name="Leatherwood J."/>
            <person name="Levin H."/>
            <person name="Margalit H."/>
            <person name="Martienssen R."/>
            <person name="Nieduszynski C.A."/>
            <person name="Spatafora J.W."/>
            <person name="Friedman N."/>
            <person name="Dalgaard J.Z."/>
            <person name="Baumann P."/>
            <person name="Niki H."/>
            <person name="Regev A."/>
            <person name="Nusbaum C."/>
        </authorList>
    </citation>
    <scope>REVISION OF GENE MODEL</scope>
</reference>
<reference key="3">
    <citation type="journal article" date="2006" name="Nat. Biotechnol.">
        <title>ORFeome cloning and global analysis of protein localization in the fission yeast Schizosaccharomyces pombe.</title>
        <authorList>
            <person name="Matsuyama A."/>
            <person name="Arai R."/>
            <person name="Yashiroda Y."/>
            <person name="Shirai A."/>
            <person name="Kamata A."/>
            <person name="Sekido S."/>
            <person name="Kobayashi Y."/>
            <person name="Hashimoto A."/>
            <person name="Hamamoto M."/>
            <person name="Hiraoka Y."/>
            <person name="Horinouchi S."/>
            <person name="Yoshida M."/>
        </authorList>
    </citation>
    <scope>SUBCELLULAR LOCATION [LARGE SCALE ANALYSIS]</scope>
</reference>
<reference key="4">
    <citation type="journal article" date="2008" name="J. Proteome Res.">
        <title>Phosphoproteome analysis of fission yeast.</title>
        <authorList>
            <person name="Wilson-Grady J.T."/>
            <person name="Villen J."/>
            <person name="Gygi S.P."/>
        </authorList>
    </citation>
    <scope>PHOSPHORYLATION [LARGE SCALE ANALYSIS] AT SER-388</scope>
    <scope>IDENTIFICATION BY MASS SPECTROMETRY</scope>
</reference>
<evidence type="ECO:0000256" key="1">
    <source>
        <dbReference type="SAM" id="MobiDB-lite"/>
    </source>
</evidence>
<evidence type="ECO:0000269" key="2">
    <source>
    </source>
</evidence>
<evidence type="ECO:0000269" key="3">
    <source>
    </source>
</evidence>
<evidence type="ECO:0000305" key="4"/>
<comment type="subcellular location">
    <subcellularLocation>
        <location evidence="2">Cytoplasm</location>
    </subcellularLocation>
    <subcellularLocation>
        <location evidence="2">Nucleus</location>
    </subcellularLocation>
</comment>
<comment type="similarity">
    <text evidence="4">Belongs to the PAF1 family.</text>
</comment>
<name>PAF1_SCHPO</name>